<name>FBL40_ARATH</name>
<accession>Q8S8Q9</accession>
<accession>Q8GYT2</accession>
<gene>
    <name type="ordered locus">At2g43260</name>
    <name type="ORF">F14B2.20</name>
</gene>
<proteinExistence type="evidence at transcript level"/>
<protein>
    <recommendedName>
        <fullName>F-box/LRR-repeat protein At2g43260</fullName>
    </recommendedName>
</protein>
<organism>
    <name type="scientific">Arabidopsis thaliana</name>
    <name type="common">Mouse-ear cress</name>
    <dbReference type="NCBI Taxonomy" id="3702"/>
    <lineage>
        <taxon>Eukaryota</taxon>
        <taxon>Viridiplantae</taxon>
        <taxon>Streptophyta</taxon>
        <taxon>Embryophyta</taxon>
        <taxon>Tracheophyta</taxon>
        <taxon>Spermatophyta</taxon>
        <taxon>Magnoliopsida</taxon>
        <taxon>eudicotyledons</taxon>
        <taxon>Gunneridae</taxon>
        <taxon>Pentapetalae</taxon>
        <taxon>rosids</taxon>
        <taxon>malvids</taxon>
        <taxon>Brassicales</taxon>
        <taxon>Brassicaceae</taxon>
        <taxon>Camelineae</taxon>
        <taxon>Arabidopsis</taxon>
    </lineage>
</organism>
<dbReference type="EMBL" id="AC004450">
    <property type="protein sequence ID" value="AAM14935.1"/>
    <property type="molecule type" value="Genomic_DNA"/>
</dbReference>
<dbReference type="EMBL" id="CP002685">
    <property type="protein sequence ID" value="AEC10240.1"/>
    <property type="molecule type" value="Genomic_DNA"/>
</dbReference>
<dbReference type="EMBL" id="BT029747">
    <property type="protein sequence ID" value="ABM06017.1"/>
    <property type="molecule type" value="mRNA"/>
</dbReference>
<dbReference type="EMBL" id="AK117405">
    <property type="protein sequence ID" value="BAC42072.1"/>
    <property type="status" value="ALT_INIT"/>
    <property type="molecule type" value="mRNA"/>
</dbReference>
<dbReference type="PIR" id="A84864">
    <property type="entry name" value="A84864"/>
</dbReference>
<dbReference type="RefSeq" id="NP_001318412.1">
    <property type="nucleotide sequence ID" value="NM_001337022.1"/>
</dbReference>
<dbReference type="SMR" id="Q8S8Q9"/>
<dbReference type="BioGRID" id="4265">
    <property type="interactions" value="1"/>
</dbReference>
<dbReference type="FunCoup" id="Q8S8Q9">
    <property type="interactions" value="317"/>
</dbReference>
<dbReference type="IntAct" id="Q8S8Q9">
    <property type="interactions" value="1"/>
</dbReference>
<dbReference type="iPTMnet" id="Q8S8Q9"/>
<dbReference type="PaxDb" id="3702-AT2G43260.1"/>
<dbReference type="EnsemblPlants" id="AT2G43260.1">
    <property type="protein sequence ID" value="AT2G43260.1"/>
    <property type="gene ID" value="AT2G43260"/>
</dbReference>
<dbReference type="GeneID" id="818928"/>
<dbReference type="Gramene" id="AT2G43260.1">
    <property type="protein sequence ID" value="AT2G43260.1"/>
    <property type="gene ID" value="AT2G43260"/>
</dbReference>
<dbReference type="KEGG" id="ath:AT2G43260"/>
<dbReference type="Araport" id="AT2G43260"/>
<dbReference type="TAIR" id="AT2G43260"/>
<dbReference type="HOGENOM" id="CLU_027176_4_1_1"/>
<dbReference type="InParanoid" id="Q8S8Q9"/>
<dbReference type="PhylomeDB" id="Q8S8Q9"/>
<dbReference type="PRO" id="PR:Q8S8Q9"/>
<dbReference type="Proteomes" id="UP000006548">
    <property type="component" value="Chromosome 2"/>
</dbReference>
<dbReference type="ExpressionAtlas" id="Q8S8Q9">
    <property type="expression patterns" value="baseline and differential"/>
</dbReference>
<dbReference type="Gene3D" id="1.20.1280.50">
    <property type="match status" value="1"/>
</dbReference>
<dbReference type="InterPro" id="IPR006527">
    <property type="entry name" value="F-box-assoc_dom_typ1"/>
</dbReference>
<dbReference type="InterPro" id="IPR017451">
    <property type="entry name" value="F-box-assoc_interact_dom"/>
</dbReference>
<dbReference type="InterPro" id="IPR036047">
    <property type="entry name" value="F-box-like_dom_sf"/>
</dbReference>
<dbReference type="InterPro" id="IPR001810">
    <property type="entry name" value="F-box_dom"/>
</dbReference>
<dbReference type="InterPro" id="IPR015915">
    <property type="entry name" value="Kelch-typ_b-propeller"/>
</dbReference>
<dbReference type="InterPro" id="IPR050796">
    <property type="entry name" value="SCF_F-box_component"/>
</dbReference>
<dbReference type="NCBIfam" id="TIGR01640">
    <property type="entry name" value="F_box_assoc_1"/>
    <property type="match status" value="1"/>
</dbReference>
<dbReference type="PANTHER" id="PTHR31672">
    <property type="entry name" value="BNACNNG10540D PROTEIN"/>
    <property type="match status" value="1"/>
</dbReference>
<dbReference type="PANTHER" id="PTHR31672:SF13">
    <property type="entry name" value="F-BOX PROTEIN CPR30-LIKE"/>
    <property type="match status" value="1"/>
</dbReference>
<dbReference type="Pfam" id="PF00646">
    <property type="entry name" value="F-box"/>
    <property type="match status" value="1"/>
</dbReference>
<dbReference type="Pfam" id="PF07734">
    <property type="entry name" value="FBA_1"/>
    <property type="match status" value="1"/>
</dbReference>
<dbReference type="SMART" id="SM00256">
    <property type="entry name" value="FBOX"/>
    <property type="match status" value="1"/>
</dbReference>
<dbReference type="SUPFAM" id="SSF81383">
    <property type="entry name" value="F-box domain"/>
    <property type="match status" value="1"/>
</dbReference>
<dbReference type="SUPFAM" id="SSF117281">
    <property type="entry name" value="Kelch motif"/>
    <property type="match status" value="1"/>
</dbReference>
<keyword id="KW-0433">Leucine-rich repeat</keyword>
<keyword id="KW-1185">Reference proteome</keyword>
<keyword id="KW-0677">Repeat</keyword>
<comment type="sequence caution" evidence="1">
    <conflict type="erroneous initiation">
        <sequence resource="EMBL-CDS" id="BAC42072"/>
    </conflict>
</comment>
<feature type="chain" id="PRO_0000281941" description="F-box/LRR-repeat protein At2g43260">
    <location>
        <begin position="1"/>
        <end position="420"/>
    </location>
</feature>
<feature type="domain" description="F-box">
    <location>
        <begin position="7"/>
        <end position="53"/>
    </location>
</feature>
<feature type="repeat" description="LRR 1">
    <location>
        <begin position="112"/>
        <end position="135"/>
    </location>
</feature>
<feature type="repeat" description="LRR 2">
    <location>
        <begin position="226"/>
        <end position="251"/>
    </location>
</feature>
<sequence length="420" mass="48963">MGEEEENPNSIDILPELLEEVLLRLPTKSILKCRIVSKQWRSLLESSRFAERHMSLQNSRRRILAAYNCDCGGRRKLLPESRFEGDEEIVYLHCDASRPSMTCQGVICFPEQDWIIVLNPSTSQLRRFPSGLNHNCRFRIGLWKTFSPGNWVMGFGRDKVNGRYKVVRMSFAFWRVRQEEPVVECGVLDVDTGEWRKLSPPPYVVNVGSKSVCVNGSIYWLHIQTVYRILALDLHKEEFHKVPVPPTQITVDTQMVNLEDRLVLAITRVSPEWILEVWGMDTYKEKWSKTYSISLDHRVVSWRRQKRWFTPVAVSKQANLVFYDNKKRLFKYYPVKDEIRCLSLDICVLSPYVENLVPLPLKPSHPHPTPKNSDFEMRISRCRLFSTPGSWISKILKWNVMTLEILFTSLAIVGYICLPL</sequence>
<reference key="1">
    <citation type="journal article" date="1999" name="Nature">
        <title>Sequence and analysis of chromosome 2 of the plant Arabidopsis thaliana.</title>
        <authorList>
            <person name="Lin X."/>
            <person name="Kaul S."/>
            <person name="Rounsley S.D."/>
            <person name="Shea T.P."/>
            <person name="Benito M.-I."/>
            <person name="Town C.D."/>
            <person name="Fujii C.Y."/>
            <person name="Mason T.M."/>
            <person name="Bowman C.L."/>
            <person name="Barnstead M.E."/>
            <person name="Feldblyum T.V."/>
            <person name="Buell C.R."/>
            <person name="Ketchum K.A."/>
            <person name="Lee J.J."/>
            <person name="Ronning C.M."/>
            <person name="Koo H.L."/>
            <person name="Moffat K.S."/>
            <person name="Cronin L.A."/>
            <person name="Shen M."/>
            <person name="Pai G."/>
            <person name="Van Aken S."/>
            <person name="Umayam L."/>
            <person name="Tallon L.J."/>
            <person name="Gill J.E."/>
            <person name="Adams M.D."/>
            <person name="Carrera A.J."/>
            <person name="Creasy T.H."/>
            <person name="Goodman H.M."/>
            <person name="Somerville C.R."/>
            <person name="Copenhaver G.P."/>
            <person name="Preuss D."/>
            <person name="Nierman W.C."/>
            <person name="White O."/>
            <person name="Eisen J.A."/>
            <person name="Salzberg S.L."/>
            <person name="Fraser C.M."/>
            <person name="Venter J.C."/>
        </authorList>
    </citation>
    <scope>NUCLEOTIDE SEQUENCE [LARGE SCALE GENOMIC DNA]</scope>
    <source>
        <strain>cv. Columbia</strain>
    </source>
</reference>
<reference key="2">
    <citation type="journal article" date="2017" name="Plant J.">
        <title>Araport11: a complete reannotation of the Arabidopsis thaliana reference genome.</title>
        <authorList>
            <person name="Cheng C.Y."/>
            <person name="Krishnakumar V."/>
            <person name="Chan A.P."/>
            <person name="Thibaud-Nissen F."/>
            <person name="Schobel S."/>
            <person name="Town C.D."/>
        </authorList>
    </citation>
    <scope>GENOME REANNOTATION</scope>
    <source>
        <strain>cv. Columbia</strain>
    </source>
</reference>
<reference key="3">
    <citation type="submission" date="2006-12" db="EMBL/GenBank/DDBJ databases">
        <title>Arabidopsis ORF clones.</title>
        <authorList>
            <person name="Bautista V.R."/>
            <person name="Kim C.J."/>
            <person name="Chen H."/>
            <person name="Wu S.Y."/>
            <person name="De Los Reyes C."/>
            <person name="Ecker J.R."/>
        </authorList>
    </citation>
    <scope>NUCLEOTIDE SEQUENCE [LARGE SCALE MRNA]</scope>
    <source>
        <strain>cv. Columbia</strain>
    </source>
</reference>
<reference key="4">
    <citation type="journal article" date="2002" name="Science">
        <title>Functional annotation of a full-length Arabidopsis cDNA collection.</title>
        <authorList>
            <person name="Seki M."/>
            <person name="Narusaka M."/>
            <person name="Kamiya A."/>
            <person name="Ishida J."/>
            <person name="Satou M."/>
            <person name="Sakurai T."/>
            <person name="Nakajima M."/>
            <person name="Enju A."/>
            <person name="Akiyama K."/>
            <person name="Oono Y."/>
            <person name="Muramatsu M."/>
            <person name="Hayashizaki Y."/>
            <person name="Kawai J."/>
            <person name="Carninci P."/>
            <person name="Itoh M."/>
            <person name="Ishii Y."/>
            <person name="Arakawa T."/>
            <person name="Shibata K."/>
            <person name="Shinagawa A."/>
            <person name="Shinozaki K."/>
        </authorList>
    </citation>
    <scope>NUCLEOTIDE SEQUENCE [LARGE SCALE MRNA] OF 3-420</scope>
    <source>
        <strain>cv. Columbia</strain>
    </source>
</reference>
<evidence type="ECO:0000305" key="1"/>